<sequence length="302" mass="32831">MMPIPATSTDSAAIPQTLLDAYALLAWRAMLTEVNLSPKPGLVDRINCGAHKDMALEDFHRSALAIQGWLPRFIEYGASCAQLPSDDVLKGLRPLGMACEADMFRATAGVNTHKGSIFSLGLLCAAIGRLHQQHSPITPANICSTAATFCRGLTERELRQNNQQLTAGQRLYQQLGLTGARGEAEAGYPLVIRHALPHYRALLAQGRDPELALLDTLLLLISMNGDTNVASRGGAEGLCWIQQQATTLLRQGGIRSPADLEHLHRFDQQCIARNLSPGGSADLLIVTWFLAQISQVNHLHNY</sequence>
<feature type="chain" id="PRO_1000049594" description="Probable 2-(5''-triphosphoribosyl)-3'-dephosphocoenzyme-A synthase">
    <location>
        <begin position="1"/>
        <end position="302"/>
    </location>
</feature>
<evidence type="ECO:0000255" key="1">
    <source>
        <dbReference type="HAMAP-Rule" id="MF_00397"/>
    </source>
</evidence>
<dbReference type="EC" id="2.4.2.52" evidence="1"/>
<dbReference type="EMBL" id="CP000822">
    <property type="protein sequence ID" value="ABV13655.1"/>
    <property type="molecule type" value="Genomic_DNA"/>
</dbReference>
<dbReference type="RefSeq" id="WP_012133374.1">
    <property type="nucleotide sequence ID" value="NC_009792.1"/>
</dbReference>
<dbReference type="STRING" id="290338.CKO_02546"/>
<dbReference type="GeneID" id="45136420"/>
<dbReference type="KEGG" id="cko:CKO_02546"/>
<dbReference type="HOGENOM" id="CLU_056179_1_0_6"/>
<dbReference type="OrthoDB" id="114886at2"/>
<dbReference type="Proteomes" id="UP000008148">
    <property type="component" value="Chromosome"/>
</dbReference>
<dbReference type="GO" id="GO:0005524">
    <property type="term" value="F:ATP binding"/>
    <property type="evidence" value="ECO:0007669"/>
    <property type="project" value="UniProtKB-KW"/>
</dbReference>
<dbReference type="GO" id="GO:0046917">
    <property type="term" value="F:triphosphoribosyl-dephospho-CoA synthase activity"/>
    <property type="evidence" value="ECO:0007669"/>
    <property type="project" value="UniProtKB-UniRule"/>
</dbReference>
<dbReference type="GO" id="GO:0051191">
    <property type="term" value="P:prosthetic group biosynthetic process"/>
    <property type="evidence" value="ECO:0007669"/>
    <property type="project" value="TreeGrafter"/>
</dbReference>
<dbReference type="FunFam" id="1.10.4200.10:FF:000001">
    <property type="entry name" value="Triphosphoribosyl-dephospho-CoA synthase CitG"/>
    <property type="match status" value="1"/>
</dbReference>
<dbReference type="Gene3D" id="1.10.4200.10">
    <property type="entry name" value="Triphosphoribosyl-dephospho-CoA protein"/>
    <property type="match status" value="1"/>
</dbReference>
<dbReference type="HAMAP" id="MF_00397">
    <property type="entry name" value="CitG"/>
    <property type="match status" value="1"/>
</dbReference>
<dbReference type="InterPro" id="IPR002736">
    <property type="entry name" value="CitG"/>
</dbReference>
<dbReference type="InterPro" id="IPR017551">
    <property type="entry name" value="TriPribosyl-deP-CoA_syn_CitG"/>
</dbReference>
<dbReference type="NCBIfam" id="TIGR03125">
    <property type="entry name" value="citrate_citG"/>
    <property type="match status" value="1"/>
</dbReference>
<dbReference type="NCBIfam" id="NF007503">
    <property type="entry name" value="PRK10096.1"/>
    <property type="match status" value="1"/>
</dbReference>
<dbReference type="PANTHER" id="PTHR30201:SF2">
    <property type="entry name" value="2-(5''-TRIPHOSPHORIBOSYL)-3'-DEPHOSPHOCOENZYME-A SYNTHASE"/>
    <property type="match status" value="1"/>
</dbReference>
<dbReference type="PANTHER" id="PTHR30201">
    <property type="entry name" value="TRIPHOSPHORIBOSYL-DEPHOSPHO-COA SYNTHASE"/>
    <property type="match status" value="1"/>
</dbReference>
<dbReference type="Pfam" id="PF01874">
    <property type="entry name" value="CitG"/>
    <property type="match status" value="1"/>
</dbReference>
<organism>
    <name type="scientific">Citrobacter koseri (strain ATCC BAA-895 / CDC 4225-83 / SGSC4696)</name>
    <dbReference type="NCBI Taxonomy" id="290338"/>
    <lineage>
        <taxon>Bacteria</taxon>
        <taxon>Pseudomonadati</taxon>
        <taxon>Pseudomonadota</taxon>
        <taxon>Gammaproteobacteria</taxon>
        <taxon>Enterobacterales</taxon>
        <taxon>Enterobacteriaceae</taxon>
        <taxon>Citrobacter</taxon>
    </lineage>
</organism>
<protein>
    <recommendedName>
        <fullName evidence="1">Probable 2-(5''-triphosphoribosyl)-3'-dephosphocoenzyme-A synthase</fullName>
        <shortName evidence="1">2-(5''-triphosphoribosyl)-3'-dephospho-CoA synthase</shortName>
        <ecNumber evidence="1">2.4.2.52</ecNumber>
    </recommendedName>
</protein>
<gene>
    <name evidence="1" type="primary">citG</name>
    <name type="ordered locus">CKO_02546</name>
</gene>
<accession>A8AJJ2</accession>
<comment type="catalytic activity">
    <reaction evidence="1">
        <text>3'-dephospho-CoA + ATP = 2'-(5''-triphospho-alpha-D-ribosyl)-3'-dephospho-CoA + adenine</text>
        <dbReference type="Rhea" id="RHEA:15117"/>
        <dbReference type="ChEBI" id="CHEBI:16708"/>
        <dbReference type="ChEBI" id="CHEBI:30616"/>
        <dbReference type="ChEBI" id="CHEBI:57328"/>
        <dbReference type="ChEBI" id="CHEBI:61378"/>
        <dbReference type="EC" id="2.4.2.52"/>
    </reaction>
</comment>
<comment type="similarity">
    <text evidence="1">Belongs to the CitG/MdcB family.</text>
</comment>
<keyword id="KW-0067">ATP-binding</keyword>
<keyword id="KW-0547">Nucleotide-binding</keyword>
<keyword id="KW-1185">Reference proteome</keyword>
<keyword id="KW-0808">Transferase</keyword>
<name>CITG_CITK8</name>
<reference key="1">
    <citation type="submission" date="2007-08" db="EMBL/GenBank/DDBJ databases">
        <authorList>
            <consortium name="The Citrobacter koseri Genome Sequencing Project"/>
            <person name="McClelland M."/>
            <person name="Sanderson E.K."/>
            <person name="Porwollik S."/>
            <person name="Spieth J."/>
            <person name="Clifton W.S."/>
            <person name="Latreille P."/>
            <person name="Courtney L."/>
            <person name="Wang C."/>
            <person name="Pepin K."/>
            <person name="Bhonagiri V."/>
            <person name="Nash W."/>
            <person name="Johnson M."/>
            <person name="Thiruvilangam P."/>
            <person name="Wilson R."/>
        </authorList>
    </citation>
    <scope>NUCLEOTIDE SEQUENCE [LARGE SCALE GENOMIC DNA]</scope>
    <source>
        <strain>ATCC BAA-895 / CDC 4225-83 / SGSC4696</strain>
    </source>
</reference>
<proteinExistence type="inferred from homology"/>